<evidence type="ECO:0000255" key="1">
    <source>
        <dbReference type="HAMAP-Rule" id="MF_00687"/>
    </source>
</evidence>
<accession>Q669X6</accession>
<name>KDUI_YERPS</name>
<gene>
    <name evidence="1" type="primary">kduI</name>
    <name type="ordered locus">YPTB2356</name>
</gene>
<feature type="chain" id="PRO_1000045099" description="4-deoxy-L-threo-5-hexosulose-uronate ketol-isomerase">
    <location>
        <begin position="1"/>
        <end position="278"/>
    </location>
</feature>
<feature type="binding site" evidence="1">
    <location>
        <position position="196"/>
    </location>
    <ligand>
        <name>Zn(2+)</name>
        <dbReference type="ChEBI" id="CHEBI:29105"/>
    </ligand>
</feature>
<feature type="binding site" evidence="1">
    <location>
        <position position="198"/>
    </location>
    <ligand>
        <name>Zn(2+)</name>
        <dbReference type="ChEBI" id="CHEBI:29105"/>
    </ligand>
</feature>
<feature type="binding site" evidence="1">
    <location>
        <position position="203"/>
    </location>
    <ligand>
        <name>Zn(2+)</name>
        <dbReference type="ChEBI" id="CHEBI:29105"/>
    </ligand>
</feature>
<feature type="binding site" evidence="1">
    <location>
        <position position="245"/>
    </location>
    <ligand>
        <name>Zn(2+)</name>
        <dbReference type="ChEBI" id="CHEBI:29105"/>
    </ligand>
</feature>
<protein>
    <recommendedName>
        <fullName evidence="1">4-deoxy-L-threo-5-hexosulose-uronate ketol-isomerase</fullName>
        <ecNumber evidence="1">5.3.1.17</ecNumber>
    </recommendedName>
    <alternativeName>
        <fullName evidence="1">5-keto-4-deoxyuronate isomerase</fullName>
    </alternativeName>
    <alternativeName>
        <fullName evidence="1">DKI isomerase</fullName>
    </alternativeName>
</protein>
<proteinExistence type="inferred from homology"/>
<organism>
    <name type="scientific">Yersinia pseudotuberculosis serotype I (strain IP32953)</name>
    <dbReference type="NCBI Taxonomy" id="273123"/>
    <lineage>
        <taxon>Bacteria</taxon>
        <taxon>Pseudomonadati</taxon>
        <taxon>Pseudomonadota</taxon>
        <taxon>Gammaproteobacteria</taxon>
        <taxon>Enterobacterales</taxon>
        <taxon>Yersiniaceae</taxon>
        <taxon>Yersinia</taxon>
    </lineage>
</organism>
<sequence length="278" mass="31083">MQVRQSIHSDHAKQLDTAGLRREFLIEKIFAADDYTMTYSHIDRIIVGGILPVSKAVSIGNEVGKQLGVSYFLERRELGAINIGGPGLIVVDGQTYDIGNEEALYVGKGAKEVKFSSIDRANPAKFYYNSAPAHTTYPNKKITLAEASPQTLGDDATSNRRTINKYIVPDVLPTCQLSMGLTKLAPGSLWNTMPCHTHERRMEVYFYFDMDEETAVFHMMGQPQETRHLLVHNEQAVISPSWSIHSGVGTKRYTFIWGMVGENQVFGDMDHIAVSELR</sequence>
<comment type="function">
    <text evidence="1">Catalyzes the isomerization of 5-dehydro-4-deoxy-D-glucuronate to 3-deoxy-D-glycero-2,5-hexodiulosonate.</text>
</comment>
<comment type="catalytic activity">
    <reaction evidence="1">
        <text>5-dehydro-4-deoxy-D-glucuronate = 3-deoxy-D-glycero-2,5-hexodiulosonate</text>
        <dbReference type="Rhea" id="RHEA:23896"/>
        <dbReference type="ChEBI" id="CHEBI:17117"/>
        <dbReference type="ChEBI" id="CHEBI:29071"/>
        <dbReference type="EC" id="5.3.1.17"/>
    </reaction>
</comment>
<comment type="cofactor">
    <cofactor evidence="1">
        <name>Zn(2+)</name>
        <dbReference type="ChEBI" id="CHEBI:29105"/>
    </cofactor>
    <text evidence="1">Binds 1 zinc ion per subunit.</text>
</comment>
<comment type="pathway">
    <text evidence="1">Glycan metabolism; pectin degradation; 2-dehydro-3-deoxy-D-gluconate from pectin: step 4/5.</text>
</comment>
<comment type="similarity">
    <text evidence="1">Belongs to the KduI family.</text>
</comment>
<dbReference type="EC" id="5.3.1.17" evidence="1"/>
<dbReference type="EMBL" id="BX936398">
    <property type="protein sequence ID" value="CAH21594.1"/>
    <property type="molecule type" value="Genomic_DNA"/>
</dbReference>
<dbReference type="RefSeq" id="WP_002210829.1">
    <property type="nucleotide sequence ID" value="NZ_CP009712.1"/>
</dbReference>
<dbReference type="SMR" id="Q669X6"/>
<dbReference type="GeneID" id="57976853"/>
<dbReference type="KEGG" id="ypo:BZ17_100"/>
<dbReference type="KEGG" id="yps:YPTB2356"/>
<dbReference type="PATRIC" id="fig|273123.14.peg.106"/>
<dbReference type="UniPathway" id="UPA00545">
    <property type="reaction ID" value="UER00826"/>
</dbReference>
<dbReference type="Proteomes" id="UP000001011">
    <property type="component" value="Chromosome"/>
</dbReference>
<dbReference type="GO" id="GO:0008697">
    <property type="term" value="F:4-deoxy-L-threo-5-hexosulose-uronate ketol-isomerase activity"/>
    <property type="evidence" value="ECO:0007669"/>
    <property type="project" value="UniProtKB-UniRule"/>
</dbReference>
<dbReference type="GO" id="GO:0008270">
    <property type="term" value="F:zinc ion binding"/>
    <property type="evidence" value="ECO:0007669"/>
    <property type="project" value="UniProtKB-UniRule"/>
</dbReference>
<dbReference type="GO" id="GO:0019698">
    <property type="term" value="P:D-galacturonate catabolic process"/>
    <property type="evidence" value="ECO:0007669"/>
    <property type="project" value="TreeGrafter"/>
</dbReference>
<dbReference type="GO" id="GO:0042840">
    <property type="term" value="P:D-glucuronate catabolic process"/>
    <property type="evidence" value="ECO:0007669"/>
    <property type="project" value="TreeGrafter"/>
</dbReference>
<dbReference type="GO" id="GO:0045490">
    <property type="term" value="P:pectin catabolic process"/>
    <property type="evidence" value="ECO:0007669"/>
    <property type="project" value="UniProtKB-UniRule"/>
</dbReference>
<dbReference type="CDD" id="cd20491">
    <property type="entry name" value="cupin_KduI_C"/>
    <property type="match status" value="1"/>
</dbReference>
<dbReference type="CDD" id="cd20294">
    <property type="entry name" value="cupin_KduI_N"/>
    <property type="match status" value="1"/>
</dbReference>
<dbReference type="FunFam" id="2.60.120.10:FF:000018">
    <property type="entry name" value="4-deoxy-L-threo-5-hexosulose-uronate ketol-isomerase"/>
    <property type="match status" value="1"/>
</dbReference>
<dbReference type="FunFam" id="2.60.120.520:FF:000001">
    <property type="entry name" value="4-deoxy-L-threo-5-hexosulose-uronate ketol-isomerase"/>
    <property type="match status" value="1"/>
</dbReference>
<dbReference type="Gene3D" id="2.60.120.10">
    <property type="entry name" value="Jelly Rolls"/>
    <property type="match status" value="1"/>
</dbReference>
<dbReference type="Gene3D" id="2.60.120.520">
    <property type="entry name" value="pectin degrading enzyme 5-keto 4- deoxyuronate isomerase, domain 1"/>
    <property type="match status" value="1"/>
</dbReference>
<dbReference type="HAMAP" id="MF_00687">
    <property type="entry name" value="KduI"/>
    <property type="match status" value="1"/>
</dbReference>
<dbReference type="InterPro" id="IPR007045">
    <property type="entry name" value="KduI"/>
</dbReference>
<dbReference type="InterPro" id="IPR021120">
    <property type="entry name" value="KduI/IolB_isomerase"/>
</dbReference>
<dbReference type="InterPro" id="IPR027449">
    <property type="entry name" value="KduI_N"/>
</dbReference>
<dbReference type="InterPro" id="IPR014710">
    <property type="entry name" value="RmlC-like_jellyroll"/>
</dbReference>
<dbReference type="InterPro" id="IPR011051">
    <property type="entry name" value="RmlC_Cupin_sf"/>
</dbReference>
<dbReference type="NCBIfam" id="NF002091">
    <property type="entry name" value="PRK00924.1"/>
    <property type="match status" value="1"/>
</dbReference>
<dbReference type="PANTHER" id="PTHR38461">
    <property type="entry name" value="4-DEOXY-L-THREO-5-HEXOSULOSE-URONATE KETOL-ISOMERASE"/>
    <property type="match status" value="1"/>
</dbReference>
<dbReference type="PANTHER" id="PTHR38461:SF1">
    <property type="entry name" value="4-DEOXY-L-THREO-5-HEXOSULOSE-URONATE KETOL-ISOMERASE"/>
    <property type="match status" value="1"/>
</dbReference>
<dbReference type="Pfam" id="PF04962">
    <property type="entry name" value="KduI"/>
    <property type="match status" value="1"/>
</dbReference>
<dbReference type="PIRSF" id="PIRSF006625">
    <property type="entry name" value="KduI"/>
    <property type="match status" value="1"/>
</dbReference>
<dbReference type="SUPFAM" id="SSF51182">
    <property type="entry name" value="RmlC-like cupins"/>
    <property type="match status" value="1"/>
</dbReference>
<keyword id="KW-0413">Isomerase</keyword>
<keyword id="KW-0479">Metal-binding</keyword>
<keyword id="KW-0862">Zinc</keyword>
<reference key="1">
    <citation type="journal article" date="2004" name="Proc. Natl. Acad. Sci. U.S.A.">
        <title>Insights into the evolution of Yersinia pestis through whole-genome comparison with Yersinia pseudotuberculosis.</title>
        <authorList>
            <person name="Chain P.S.G."/>
            <person name="Carniel E."/>
            <person name="Larimer F.W."/>
            <person name="Lamerdin J."/>
            <person name="Stoutland P.O."/>
            <person name="Regala W.M."/>
            <person name="Georgescu A.M."/>
            <person name="Vergez L.M."/>
            <person name="Land M.L."/>
            <person name="Motin V.L."/>
            <person name="Brubaker R.R."/>
            <person name="Fowler J."/>
            <person name="Hinnebusch J."/>
            <person name="Marceau M."/>
            <person name="Medigue C."/>
            <person name="Simonet M."/>
            <person name="Chenal-Francisque V."/>
            <person name="Souza B."/>
            <person name="Dacheux D."/>
            <person name="Elliott J.M."/>
            <person name="Derbise A."/>
            <person name="Hauser L.J."/>
            <person name="Garcia E."/>
        </authorList>
    </citation>
    <scope>NUCLEOTIDE SEQUENCE [LARGE SCALE GENOMIC DNA]</scope>
    <source>
        <strain>IP32953</strain>
    </source>
</reference>